<comment type="function">
    <text evidence="1">NDH-1 shuttles electrons from NADH, via FMN and iron-sulfur (Fe-S) centers, to quinones in the respiratory chain. The immediate electron acceptor for the enzyme in this species is believed to be ubiquinone. Couples the redox reaction to proton translocation (for every two electrons transferred, four hydrogen ions are translocated across the cytoplasmic membrane), and thus conserves the redox energy in a proton gradient.</text>
</comment>
<comment type="catalytic activity">
    <reaction evidence="1">
        <text>a quinone + NADH + 5 H(+)(in) = a quinol + NAD(+) + 4 H(+)(out)</text>
        <dbReference type="Rhea" id="RHEA:57888"/>
        <dbReference type="ChEBI" id="CHEBI:15378"/>
        <dbReference type="ChEBI" id="CHEBI:24646"/>
        <dbReference type="ChEBI" id="CHEBI:57540"/>
        <dbReference type="ChEBI" id="CHEBI:57945"/>
        <dbReference type="ChEBI" id="CHEBI:132124"/>
    </reaction>
</comment>
<comment type="cofactor">
    <cofactor evidence="1">
        <name>[4Fe-4S] cluster</name>
        <dbReference type="ChEBI" id="CHEBI:49883"/>
    </cofactor>
    <text evidence="1">Binds 1 [4Fe-4S] cluster.</text>
</comment>
<comment type="subunit">
    <text evidence="1">NDH-1 is composed of 14 different subunits. Subunits NuoB, C, D, E, F, and G constitute the peripheral sector of the complex.</text>
</comment>
<comment type="subcellular location">
    <subcellularLocation>
        <location evidence="1">Cell inner membrane</location>
        <topology evidence="1">Peripheral membrane protein</topology>
        <orientation evidence="1">Cytoplasmic side</orientation>
    </subcellularLocation>
</comment>
<comment type="similarity">
    <text evidence="1">Belongs to the complex I 20 kDa subunit family.</text>
</comment>
<reference key="1">
    <citation type="submission" date="2008-12" db="EMBL/GenBank/DDBJ databases">
        <title>Complete sequence of chromosome of Methylobacterium chloromethanicum CM4.</title>
        <authorList>
            <consortium name="US DOE Joint Genome Institute"/>
            <person name="Lucas S."/>
            <person name="Copeland A."/>
            <person name="Lapidus A."/>
            <person name="Glavina del Rio T."/>
            <person name="Dalin E."/>
            <person name="Tice H."/>
            <person name="Bruce D."/>
            <person name="Goodwin L."/>
            <person name="Pitluck S."/>
            <person name="Chertkov O."/>
            <person name="Brettin T."/>
            <person name="Detter J.C."/>
            <person name="Han C."/>
            <person name="Larimer F."/>
            <person name="Land M."/>
            <person name="Hauser L."/>
            <person name="Kyrpides N."/>
            <person name="Mikhailova N."/>
            <person name="Marx C."/>
            <person name="Richardson P."/>
        </authorList>
    </citation>
    <scope>NUCLEOTIDE SEQUENCE [LARGE SCALE GENOMIC DNA]</scope>
    <source>
        <strain>CM4 / NCIMB 13688</strain>
    </source>
</reference>
<feature type="chain" id="PRO_1000166659" description="NADH-quinone oxidoreductase subunit B">
    <location>
        <begin position="1"/>
        <end position="195"/>
    </location>
</feature>
<feature type="binding site" evidence="1">
    <location>
        <position position="74"/>
    </location>
    <ligand>
        <name>[4Fe-4S] cluster</name>
        <dbReference type="ChEBI" id="CHEBI:49883"/>
    </ligand>
</feature>
<feature type="binding site" evidence="1">
    <location>
        <position position="75"/>
    </location>
    <ligand>
        <name>[4Fe-4S] cluster</name>
        <dbReference type="ChEBI" id="CHEBI:49883"/>
    </ligand>
</feature>
<feature type="binding site" evidence="1">
    <location>
        <position position="139"/>
    </location>
    <ligand>
        <name>[4Fe-4S] cluster</name>
        <dbReference type="ChEBI" id="CHEBI:49883"/>
    </ligand>
</feature>
<feature type="binding site" evidence="1">
    <location>
        <position position="169"/>
    </location>
    <ligand>
        <name>[4Fe-4S] cluster</name>
        <dbReference type="ChEBI" id="CHEBI:49883"/>
    </ligand>
</feature>
<accession>B7KQ65</accession>
<evidence type="ECO:0000255" key="1">
    <source>
        <dbReference type="HAMAP-Rule" id="MF_01356"/>
    </source>
</evidence>
<keyword id="KW-0004">4Fe-4S</keyword>
<keyword id="KW-0997">Cell inner membrane</keyword>
<keyword id="KW-1003">Cell membrane</keyword>
<keyword id="KW-0408">Iron</keyword>
<keyword id="KW-0411">Iron-sulfur</keyword>
<keyword id="KW-0472">Membrane</keyword>
<keyword id="KW-0479">Metal-binding</keyword>
<keyword id="KW-0520">NAD</keyword>
<keyword id="KW-0874">Quinone</keyword>
<keyword id="KW-1278">Translocase</keyword>
<keyword id="KW-0813">Transport</keyword>
<keyword id="KW-0830">Ubiquinone</keyword>
<name>NUOB_METC4</name>
<gene>
    <name evidence="1" type="primary">nuoB</name>
    <name type="ordered locus">Mchl_1213</name>
</gene>
<organism>
    <name type="scientific">Methylorubrum extorquens (strain CM4 / NCIMB 13688)</name>
    <name type="common">Methylobacterium extorquens</name>
    <dbReference type="NCBI Taxonomy" id="440085"/>
    <lineage>
        <taxon>Bacteria</taxon>
        <taxon>Pseudomonadati</taxon>
        <taxon>Pseudomonadota</taxon>
        <taxon>Alphaproteobacteria</taxon>
        <taxon>Hyphomicrobiales</taxon>
        <taxon>Methylobacteriaceae</taxon>
        <taxon>Methylorubrum</taxon>
    </lineage>
</organism>
<protein>
    <recommendedName>
        <fullName evidence="1">NADH-quinone oxidoreductase subunit B</fullName>
        <ecNumber evidence="1">7.1.1.-</ecNumber>
    </recommendedName>
    <alternativeName>
        <fullName evidence="1">NADH dehydrogenase I subunit B</fullName>
    </alternativeName>
    <alternativeName>
        <fullName evidence="1">NDH-1 subunit B</fullName>
    </alternativeName>
</protein>
<dbReference type="EC" id="7.1.1.-" evidence="1"/>
<dbReference type="EMBL" id="CP001298">
    <property type="protein sequence ID" value="ACK82101.1"/>
    <property type="molecule type" value="Genomic_DNA"/>
</dbReference>
<dbReference type="RefSeq" id="WP_003598199.1">
    <property type="nucleotide sequence ID" value="NC_011757.1"/>
</dbReference>
<dbReference type="SMR" id="B7KQ65"/>
<dbReference type="KEGG" id="mch:Mchl_1213"/>
<dbReference type="HOGENOM" id="CLU_055737_7_0_5"/>
<dbReference type="Proteomes" id="UP000002385">
    <property type="component" value="Chromosome"/>
</dbReference>
<dbReference type="GO" id="GO:0005886">
    <property type="term" value="C:plasma membrane"/>
    <property type="evidence" value="ECO:0007669"/>
    <property type="project" value="UniProtKB-SubCell"/>
</dbReference>
<dbReference type="GO" id="GO:0045271">
    <property type="term" value="C:respiratory chain complex I"/>
    <property type="evidence" value="ECO:0007669"/>
    <property type="project" value="TreeGrafter"/>
</dbReference>
<dbReference type="GO" id="GO:0051539">
    <property type="term" value="F:4 iron, 4 sulfur cluster binding"/>
    <property type="evidence" value="ECO:0007669"/>
    <property type="project" value="UniProtKB-KW"/>
</dbReference>
<dbReference type="GO" id="GO:0005506">
    <property type="term" value="F:iron ion binding"/>
    <property type="evidence" value="ECO:0007669"/>
    <property type="project" value="UniProtKB-UniRule"/>
</dbReference>
<dbReference type="GO" id="GO:0008137">
    <property type="term" value="F:NADH dehydrogenase (ubiquinone) activity"/>
    <property type="evidence" value="ECO:0007669"/>
    <property type="project" value="InterPro"/>
</dbReference>
<dbReference type="GO" id="GO:0050136">
    <property type="term" value="F:NADH:ubiquinone reductase (non-electrogenic) activity"/>
    <property type="evidence" value="ECO:0007669"/>
    <property type="project" value="UniProtKB-UniRule"/>
</dbReference>
<dbReference type="GO" id="GO:0048038">
    <property type="term" value="F:quinone binding"/>
    <property type="evidence" value="ECO:0007669"/>
    <property type="project" value="UniProtKB-KW"/>
</dbReference>
<dbReference type="GO" id="GO:0009060">
    <property type="term" value="P:aerobic respiration"/>
    <property type="evidence" value="ECO:0007669"/>
    <property type="project" value="TreeGrafter"/>
</dbReference>
<dbReference type="GO" id="GO:0015990">
    <property type="term" value="P:electron transport coupled proton transport"/>
    <property type="evidence" value="ECO:0007669"/>
    <property type="project" value="TreeGrafter"/>
</dbReference>
<dbReference type="FunFam" id="3.40.50.12280:FF:000001">
    <property type="entry name" value="NADH-quinone oxidoreductase subunit B 2"/>
    <property type="match status" value="1"/>
</dbReference>
<dbReference type="Gene3D" id="3.40.50.12280">
    <property type="match status" value="1"/>
</dbReference>
<dbReference type="HAMAP" id="MF_01356">
    <property type="entry name" value="NDH1_NuoB"/>
    <property type="match status" value="1"/>
</dbReference>
<dbReference type="InterPro" id="IPR006137">
    <property type="entry name" value="NADH_UbQ_OxRdtase-like_20kDa"/>
</dbReference>
<dbReference type="InterPro" id="IPR006138">
    <property type="entry name" value="NADH_UQ_OxRdtase_20Kd_su"/>
</dbReference>
<dbReference type="NCBIfam" id="TIGR01957">
    <property type="entry name" value="nuoB_fam"/>
    <property type="match status" value="1"/>
</dbReference>
<dbReference type="NCBIfam" id="NF005012">
    <property type="entry name" value="PRK06411.1"/>
    <property type="match status" value="1"/>
</dbReference>
<dbReference type="PANTHER" id="PTHR11995">
    <property type="entry name" value="NADH DEHYDROGENASE"/>
    <property type="match status" value="1"/>
</dbReference>
<dbReference type="PANTHER" id="PTHR11995:SF14">
    <property type="entry name" value="NADH DEHYDROGENASE [UBIQUINONE] IRON-SULFUR PROTEIN 7, MITOCHONDRIAL"/>
    <property type="match status" value="1"/>
</dbReference>
<dbReference type="Pfam" id="PF01058">
    <property type="entry name" value="Oxidored_q6"/>
    <property type="match status" value="1"/>
</dbReference>
<dbReference type="SUPFAM" id="SSF56770">
    <property type="entry name" value="HydA/Nqo6-like"/>
    <property type="match status" value="1"/>
</dbReference>
<dbReference type="PROSITE" id="PS01150">
    <property type="entry name" value="COMPLEX1_20K"/>
    <property type="match status" value="1"/>
</dbReference>
<sequence length="195" mass="21393">MALTPTFSRAPDIAPAPKGIIDPATGRPIGANDPTFLSINDELADRGFLVTSADELINWARTGSLMWMTFGLACCAVEMMQMSMPRYDCERFGFAPRGSPRQSDVMIVAGTLTNKMAPALRKVYDQMPEPRYVISMGSCANGGGYYHYSYSVVRGCDRVVPVDIYVPGCPPSAEALLYGVLLLQRKIRRIGTIER</sequence>
<proteinExistence type="inferred from homology"/>